<name>PPID_EREGS</name>
<feature type="chain" id="PRO_0000232941" description="Peptidyl-prolyl cis-trans isomerase D">
    <location>
        <begin position="1"/>
        <end position="369"/>
    </location>
</feature>
<feature type="domain" description="PPIase cyclophilin-type" evidence="2">
    <location>
        <begin position="8"/>
        <end position="173"/>
    </location>
</feature>
<feature type="repeat" description="TPR 1">
    <location>
        <begin position="218"/>
        <end position="251"/>
    </location>
</feature>
<feature type="repeat" description="TPR 2">
    <location>
        <begin position="269"/>
        <end position="302"/>
    </location>
</feature>
<feature type="repeat" description="TPR 3">
    <location>
        <begin position="306"/>
        <end position="339"/>
    </location>
</feature>
<keyword id="KW-0963">Cytoplasm</keyword>
<keyword id="KW-0413">Isomerase</keyword>
<keyword id="KW-1185">Reference proteome</keyword>
<keyword id="KW-0677">Repeat</keyword>
<keyword id="KW-0697">Rotamase</keyword>
<keyword id="KW-0802">TPR repeat</keyword>
<comment type="function">
    <text evidence="1">PPIases accelerate the folding of proteins. It catalyzes the cis-trans isomerization of proline imidic peptide bonds in oligopeptides (By similarity).</text>
</comment>
<comment type="catalytic activity">
    <reaction>
        <text>[protein]-peptidylproline (omega=180) = [protein]-peptidylproline (omega=0)</text>
        <dbReference type="Rhea" id="RHEA:16237"/>
        <dbReference type="Rhea" id="RHEA-COMP:10747"/>
        <dbReference type="Rhea" id="RHEA-COMP:10748"/>
        <dbReference type="ChEBI" id="CHEBI:83833"/>
        <dbReference type="ChEBI" id="CHEBI:83834"/>
        <dbReference type="EC" id="5.2.1.8"/>
    </reaction>
</comment>
<comment type="subcellular location">
    <subcellularLocation>
        <location evidence="1">Cytoplasm</location>
    </subcellularLocation>
</comment>
<comment type="similarity">
    <text evidence="3">Belongs to the cyclophilin-type PPIase family. PPIase D subfamily.</text>
</comment>
<dbReference type="EC" id="5.2.1.8"/>
<dbReference type="EMBL" id="AE016817">
    <property type="protein sequence ID" value="AAS52007.1"/>
    <property type="molecule type" value="Genomic_DNA"/>
</dbReference>
<dbReference type="RefSeq" id="NP_984183.1">
    <property type="nucleotide sequence ID" value="NM_209536.2"/>
</dbReference>
<dbReference type="SMR" id="Q75A33"/>
<dbReference type="FunCoup" id="Q75A33">
    <property type="interactions" value="1155"/>
</dbReference>
<dbReference type="STRING" id="284811.Q75A33"/>
<dbReference type="EnsemblFungi" id="AAS52007">
    <property type="protein sequence ID" value="AAS52007"/>
    <property type="gene ID" value="AGOS_ADR087C"/>
</dbReference>
<dbReference type="GeneID" id="4620332"/>
<dbReference type="KEGG" id="ago:AGOS_ADR087C"/>
<dbReference type="eggNOG" id="KOG0546">
    <property type="taxonomic scope" value="Eukaryota"/>
</dbReference>
<dbReference type="HOGENOM" id="CLU_012062_37_0_1"/>
<dbReference type="InParanoid" id="Q75A33"/>
<dbReference type="OMA" id="EMEQNCN"/>
<dbReference type="OrthoDB" id="193499at2759"/>
<dbReference type="Proteomes" id="UP000000591">
    <property type="component" value="Chromosome IV"/>
</dbReference>
<dbReference type="GO" id="GO:0005737">
    <property type="term" value="C:cytoplasm"/>
    <property type="evidence" value="ECO:0000318"/>
    <property type="project" value="GO_Central"/>
</dbReference>
<dbReference type="GO" id="GO:0043231">
    <property type="term" value="C:intracellular membrane-bounded organelle"/>
    <property type="evidence" value="ECO:0000318"/>
    <property type="project" value="GO_Central"/>
</dbReference>
<dbReference type="GO" id="GO:0016018">
    <property type="term" value="F:cyclosporin A binding"/>
    <property type="evidence" value="ECO:0000318"/>
    <property type="project" value="GO_Central"/>
</dbReference>
<dbReference type="GO" id="GO:0003755">
    <property type="term" value="F:peptidyl-prolyl cis-trans isomerase activity"/>
    <property type="evidence" value="ECO:0000318"/>
    <property type="project" value="GO_Central"/>
</dbReference>
<dbReference type="GO" id="GO:0043022">
    <property type="term" value="F:ribosome binding"/>
    <property type="evidence" value="ECO:0007669"/>
    <property type="project" value="EnsemblFungi"/>
</dbReference>
<dbReference type="GO" id="GO:0051082">
    <property type="term" value="F:unfolded protein binding"/>
    <property type="evidence" value="ECO:0007669"/>
    <property type="project" value="EnsemblFungi"/>
</dbReference>
<dbReference type="GO" id="GO:0006457">
    <property type="term" value="P:protein folding"/>
    <property type="evidence" value="ECO:0000318"/>
    <property type="project" value="GO_Central"/>
</dbReference>
<dbReference type="GO" id="GO:0042026">
    <property type="term" value="P:protein refolding"/>
    <property type="evidence" value="ECO:0007669"/>
    <property type="project" value="EnsemblFungi"/>
</dbReference>
<dbReference type="CDD" id="cd01926">
    <property type="entry name" value="cyclophilin_ABH_like"/>
    <property type="match status" value="1"/>
</dbReference>
<dbReference type="FunFam" id="2.40.100.10:FF:000045">
    <property type="entry name" value="Peptidyl-prolyl cis-trans isomerase D"/>
    <property type="match status" value="1"/>
</dbReference>
<dbReference type="FunFam" id="1.25.40.10:FF:000029">
    <property type="entry name" value="peptidyl-prolyl cis-trans isomerase D"/>
    <property type="match status" value="1"/>
</dbReference>
<dbReference type="Gene3D" id="2.40.100.10">
    <property type="entry name" value="Cyclophilin-like"/>
    <property type="match status" value="1"/>
</dbReference>
<dbReference type="Gene3D" id="1.25.40.10">
    <property type="entry name" value="Tetratricopeptide repeat domain"/>
    <property type="match status" value="1"/>
</dbReference>
<dbReference type="InterPro" id="IPR029000">
    <property type="entry name" value="Cyclophilin-like_dom_sf"/>
</dbReference>
<dbReference type="InterPro" id="IPR020892">
    <property type="entry name" value="Cyclophilin-type_PPIase_CS"/>
</dbReference>
<dbReference type="InterPro" id="IPR002130">
    <property type="entry name" value="Cyclophilin-type_PPIase_dom"/>
</dbReference>
<dbReference type="InterPro" id="IPR011990">
    <property type="entry name" value="TPR-like_helical_dom_sf"/>
</dbReference>
<dbReference type="InterPro" id="IPR019734">
    <property type="entry name" value="TPR_rpt"/>
</dbReference>
<dbReference type="PANTHER" id="PTHR11071">
    <property type="entry name" value="PEPTIDYL-PROLYL CIS-TRANS ISOMERASE"/>
    <property type="match status" value="1"/>
</dbReference>
<dbReference type="PANTHER" id="PTHR11071:SF561">
    <property type="entry name" value="PEPTIDYL-PROLYL CIS-TRANS ISOMERASE D-RELATED"/>
    <property type="match status" value="1"/>
</dbReference>
<dbReference type="Pfam" id="PF00160">
    <property type="entry name" value="Pro_isomerase"/>
    <property type="match status" value="1"/>
</dbReference>
<dbReference type="PRINTS" id="PR00153">
    <property type="entry name" value="CSAPPISMRASE"/>
</dbReference>
<dbReference type="SMART" id="SM00028">
    <property type="entry name" value="TPR"/>
    <property type="match status" value="2"/>
</dbReference>
<dbReference type="SUPFAM" id="SSF50891">
    <property type="entry name" value="Cyclophilin-like"/>
    <property type="match status" value="1"/>
</dbReference>
<dbReference type="SUPFAM" id="SSF48452">
    <property type="entry name" value="TPR-like"/>
    <property type="match status" value="1"/>
</dbReference>
<dbReference type="PROSITE" id="PS00170">
    <property type="entry name" value="CSA_PPIASE_1"/>
    <property type="match status" value="1"/>
</dbReference>
<dbReference type="PROSITE" id="PS50072">
    <property type="entry name" value="CSA_PPIASE_2"/>
    <property type="match status" value="1"/>
</dbReference>
<dbReference type="PROSITE" id="PS50005">
    <property type="entry name" value="TPR"/>
    <property type="match status" value="2"/>
</dbReference>
<dbReference type="PROSITE" id="PS50293">
    <property type="entry name" value="TPR_REGION"/>
    <property type="match status" value="1"/>
</dbReference>
<evidence type="ECO:0000250" key="1"/>
<evidence type="ECO:0000255" key="2">
    <source>
        <dbReference type="PROSITE-ProRule" id="PRU00156"/>
    </source>
</evidence>
<evidence type="ECO:0000305" key="3"/>
<accession>Q75A33</accession>
<sequence length="369" mass="39990">MTERQKTYFDLSIGGKPAGRVVFEVYSDVTPKTAENFVRLCAGDAGECRTKPGVPLCYQGSLFHRVIKGFMCQFGDFTNGDGTGGESIYGEKFEDENFARKHDRPFLLSMANAGPNTNGSQCFITCAPTPHLDGKHVVFGEVIQGKRVVRAIERQETAADRPLADVRIDACGILPASYEVPADAEATPADEYGDDYEETLADDAKVDLADPRSVIRAVEAVKAIGTAQLQAARFDVAVQKYAKAAGFLQEYFPDDLPDADVAALEQLKVAVHLNLALAALKAGNHQRVLSAASEVLHGAADDKAKAKALYRRGLAYHHLKDPEMALTDLELAATYQPGDAGIAQAIVNARALKQKLREQQKKALSKMFS</sequence>
<protein>
    <recommendedName>
        <fullName>Peptidyl-prolyl cis-trans isomerase D</fullName>
        <shortName>PPIase D</shortName>
        <ecNumber>5.2.1.8</ecNumber>
    </recommendedName>
    <alternativeName>
        <fullName>Rotamase D</fullName>
    </alternativeName>
</protein>
<organism>
    <name type="scientific">Eremothecium gossypii (strain ATCC 10895 / CBS 109.51 / FGSC 9923 / NRRL Y-1056)</name>
    <name type="common">Yeast</name>
    <name type="synonym">Ashbya gossypii</name>
    <dbReference type="NCBI Taxonomy" id="284811"/>
    <lineage>
        <taxon>Eukaryota</taxon>
        <taxon>Fungi</taxon>
        <taxon>Dikarya</taxon>
        <taxon>Ascomycota</taxon>
        <taxon>Saccharomycotina</taxon>
        <taxon>Saccharomycetes</taxon>
        <taxon>Saccharomycetales</taxon>
        <taxon>Saccharomycetaceae</taxon>
        <taxon>Eremothecium</taxon>
    </lineage>
</organism>
<gene>
    <name type="primary">CPR6</name>
    <name type="ordered locus">ADR087C</name>
</gene>
<proteinExistence type="inferred from homology"/>
<reference key="1">
    <citation type="journal article" date="2004" name="Science">
        <title>The Ashbya gossypii genome as a tool for mapping the ancient Saccharomyces cerevisiae genome.</title>
        <authorList>
            <person name="Dietrich F.S."/>
            <person name="Voegeli S."/>
            <person name="Brachat S."/>
            <person name="Lerch A."/>
            <person name="Gates K."/>
            <person name="Steiner S."/>
            <person name="Mohr C."/>
            <person name="Poehlmann R."/>
            <person name="Luedi P."/>
            <person name="Choi S."/>
            <person name="Wing R.A."/>
            <person name="Flavier A."/>
            <person name="Gaffney T.D."/>
            <person name="Philippsen P."/>
        </authorList>
    </citation>
    <scope>NUCLEOTIDE SEQUENCE [LARGE SCALE GENOMIC DNA]</scope>
    <source>
        <strain>ATCC 10895 / CBS 109.51 / FGSC 9923 / NRRL Y-1056</strain>
    </source>
</reference>
<reference key="2">
    <citation type="journal article" date="2013" name="G3 (Bethesda)">
        <title>Genomes of Ashbya fungi isolated from insects reveal four mating-type loci, numerous translocations, lack of transposons, and distinct gene duplications.</title>
        <authorList>
            <person name="Dietrich F.S."/>
            <person name="Voegeli S."/>
            <person name="Kuo S."/>
            <person name="Philippsen P."/>
        </authorList>
    </citation>
    <scope>GENOME REANNOTATION</scope>
    <source>
        <strain>ATCC 10895 / CBS 109.51 / FGSC 9923 / NRRL Y-1056</strain>
    </source>
</reference>